<evidence type="ECO:0000250" key="1"/>
<evidence type="ECO:0000250" key="2">
    <source>
        <dbReference type="UniProtKB" id="O43148"/>
    </source>
</evidence>
<evidence type="ECO:0000255" key="3">
    <source>
        <dbReference type="PROSITE-ProRule" id="PRU00895"/>
    </source>
</evidence>
<evidence type="ECO:0000256" key="4">
    <source>
        <dbReference type="SAM" id="MobiDB-lite"/>
    </source>
</evidence>
<organism>
    <name type="scientific">Neosartorya fischeri (strain ATCC 1020 / DSM 3700 / CBS 544.65 / FGSC A1164 / JCM 1740 / NRRL 181 / WB 181)</name>
    <name type="common">Aspergillus fischerianus</name>
    <dbReference type="NCBI Taxonomy" id="331117"/>
    <lineage>
        <taxon>Eukaryota</taxon>
        <taxon>Fungi</taxon>
        <taxon>Dikarya</taxon>
        <taxon>Ascomycota</taxon>
        <taxon>Pezizomycotina</taxon>
        <taxon>Eurotiomycetes</taxon>
        <taxon>Eurotiomycetidae</taxon>
        <taxon>Eurotiales</taxon>
        <taxon>Aspergillaceae</taxon>
        <taxon>Aspergillus</taxon>
        <taxon>Aspergillus subgen. Fumigati</taxon>
    </lineage>
</organism>
<reference key="1">
    <citation type="journal article" date="2008" name="PLoS Genet.">
        <title>Genomic islands in the pathogenic filamentous fungus Aspergillus fumigatus.</title>
        <authorList>
            <person name="Fedorova N.D."/>
            <person name="Khaldi N."/>
            <person name="Joardar V.S."/>
            <person name="Maiti R."/>
            <person name="Amedeo P."/>
            <person name="Anderson M.J."/>
            <person name="Crabtree J."/>
            <person name="Silva J.C."/>
            <person name="Badger J.H."/>
            <person name="Albarraq A."/>
            <person name="Angiuoli S."/>
            <person name="Bussey H."/>
            <person name="Bowyer P."/>
            <person name="Cotty P.J."/>
            <person name="Dyer P.S."/>
            <person name="Egan A."/>
            <person name="Galens K."/>
            <person name="Fraser-Liggett C.M."/>
            <person name="Haas B.J."/>
            <person name="Inman J.M."/>
            <person name="Kent R."/>
            <person name="Lemieux S."/>
            <person name="Malavazi I."/>
            <person name="Orvis J."/>
            <person name="Roemer T."/>
            <person name="Ronning C.M."/>
            <person name="Sundaram J.P."/>
            <person name="Sutton G."/>
            <person name="Turner G."/>
            <person name="Venter J.C."/>
            <person name="White O.R."/>
            <person name="Whitty B.R."/>
            <person name="Youngman P."/>
            <person name="Wolfe K.H."/>
            <person name="Goldman G.H."/>
            <person name="Wortman J.R."/>
            <person name="Jiang B."/>
            <person name="Denning D.W."/>
            <person name="Nierman W.C."/>
        </authorList>
    </citation>
    <scope>NUCLEOTIDE SEQUENCE [LARGE SCALE GENOMIC DNA]</scope>
    <source>
        <strain>ATCC 1020 / DSM 3700 / CBS 544.65 / FGSC A1164 / JCM 1740 / NRRL 181 / WB 181</strain>
    </source>
</reference>
<comment type="function">
    <text evidence="1">Responsible for methylating the 5'-cap structure of mRNAs.</text>
</comment>
<comment type="catalytic activity">
    <reaction evidence="2 3">
        <text>a 5'-end (5'-triphosphoguanosine)-ribonucleoside in mRNA + S-adenosyl-L-methionine = a 5'-end (N(7)-methyl 5'-triphosphoguanosine)-ribonucleoside in mRNA + S-adenosyl-L-homocysteine</text>
        <dbReference type="Rhea" id="RHEA:67008"/>
        <dbReference type="Rhea" id="RHEA-COMP:17166"/>
        <dbReference type="Rhea" id="RHEA-COMP:17167"/>
        <dbReference type="ChEBI" id="CHEBI:57856"/>
        <dbReference type="ChEBI" id="CHEBI:59789"/>
        <dbReference type="ChEBI" id="CHEBI:156461"/>
        <dbReference type="ChEBI" id="CHEBI:167617"/>
        <dbReference type="EC" id="2.1.1.56"/>
    </reaction>
</comment>
<comment type="subcellular location">
    <subcellularLocation>
        <location evidence="1">Nucleus</location>
    </subcellularLocation>
</comment>
<comment type="similarity">
    <text evidence="3">Belongs to the class I-like SAM-binding methyltransferase superfamily. mRNA cap 0 methyltransferase family.</text>
</comment>
<keyword id="KW-0489">Methyltransferase</keyword>
<keyword id="KW-0506">mRNA capping</keyword>
<keyword id="KW-0507">mRNA processing</keyword>
<keyword id="KW-0539">Nucleus</keyword>
<keyword id="KW-1185">Reference proteome</keyword>
<keyword id="KW-0694">RNA-binding</keyword>
<keyword id="KW-0949">S-adenosyl-L-methionine</keyword>
<keyword id="KW-0808">Transferase</keyword>
<name>MCES_NEOFI</name>
<dbReference type="EC" id="2.1.1.56" evidence="2"/>
<dbReference type="EMBL" id="DS027698">
    <property type="protein sequence ID" value="EAW15990.1"/>
    <property type="molecule type" value="Genomic_DNA"/>
</dbReference>
<dbReference type="RefSeq" id="XP_001257887.1">
    <property type="nucleotide sequence ID" value="XM_001257886.1"/>
</dbReference>
<dbReference type="SMR" id="A1DMG9"/>
<dbReference type="STRING" id="331117.A1DMG9"/>
<dbReference type="EnsemblFungi" id="EAW15990">
    <property type="protein sequence ID" value="EAW15990"/>
    <property type="gene ID" value="NFIA_053360"/>
</dbReference>
<dbReference type="GeneID" id="4584402"/>
<dbReference type="KEGG" id="nfi:NFIA_053360"/>
<dbReference type="VEuPathDB" id="FungiDB:NFIA_053360"/>
<dbReference type="eggNOG" id="KOG1975">
    <property type="taxonomic scope" value="Eukaryota"/>
</dbReference>
<dbReference type="HOGENOM" id="CLU_020346_3_0_1"/>
<dbReference type="OMA" id="KPFLEVW"/>
<dbReference type="OrthoDB" id="10248867at2759"/>
<dbReference type="Proteomes" id="UP000006702">
    <property type="component" value="Unassembled WGS sequence"/>
</dbReference>
<dbReference type="GO" id="GO:0005634">
    <property type="term" value="C:nucleus"/>
    <property type="evidence" value="ECO:0007669"/>
    <property type="project" value="UniProtKB-SubCell"/>
</dbReference>
<dbReference type="GO" id="GO:0004482">
    <property type="term" value="F:mRNA 5'-cap (guanine-N7-)-methyltransferase activity"/>
    <property type="evidence" value="ECO:0007669"/>
    <property type="project" value="UniProtKB-EC"/>
</dbReference>
<dbReference type="GO" id="GO:0003723">
    <property type="term" value="F:RNA binding"/>
    <property type="evidence" value="ECO:0007669"/>
    <property type="project" value="UniProtKB-KW"/>
</dbReference>
<dbReference type="CDD" id="cd02440">
    <property type="entry name" value="AdoMet_MTases"/>
    <property type="match status" value="1"/>
</dbReference>
<dbReference type="FunFam" id="3.40.50.150:FF:000231">
    <property type="entry name" value="mRNA cap guanine-N7 methyltransferase"/>
    <property type="match status" value="1"/>
</dbReference>
<dbReference type="Gene3D" id="3.40.50.150">
    <property type="entry name" value="Vaccinia Virus protein VP39"/>
    <property type="match status" value="1"/>
</dbReference>
<dbReference type="InterPro" id="IPR004971">
    <property type="entry name" value="mRNA_G-N7_MeTrfase_dom"/>
</dbReference>
<dbReference type="InterPro" id="IPR039753">
    <property type="entry name" value="RG7MT1"/>
</dbReference>
<dbReference type="InterPro" id="IPR029063">
    <property type="entry name" value="SAM-dependent_MTases_sf"/>
</dbReference>
<dbReference type="PANTHER" id="PTHR12189:SF2">
    <property type="entry name" value="MRNA CAP GUANINE-N7 METHYLTRANSFERASE"/>
    <property type="match status" value="1"/>
</dbReference>
<dbReference type="PANTHER" id="PTHR12189">
    <property type="entry name" value="MRNA GUANINE-7- METHYLTRANSFERASE"/>
    <property type="match status" value="1"/>
</dbReference>
<dbReference type="Pfam" id="PF03291">
    <property type="entry name" value="mRNA_G-N7_MeTrfase"/>
    <property type="match status" value="1"/>
</dbReference>
<dbReference type="SUPFAM" id="SSF53335">
    <property type="entry name" value="S-adenosyl-L-methionine-dependent methyltransferases"/>
    <property type="match status" value="1"/>
</dbReference>
<dbReference type="PROSITE" id="PS51562">
    <property type="entry name" value="RNA_CAP0_MT"/>
    <property type="match status" value="1"/>
</dbReference>
<feature type="chain" id="PRO_0000303912" description="mRNA cap guanine-N(7) methyltransferase">
    <location>
        <begin position="1"/>
        <end position="667"/>
    </location>
</feature>
<feature type="domain" description="mRNA cap 0 methyltransferase" evidence="3">
    <location>
        <begin position="309"/>
        <end position="667"/>
    </location>
</feature>
<feature type="region of interest" description="Disordered" evidence="4">
    <location>
        <begin position="1"/>
        <end position="272"/>
    </location>
</feature>
<feature type="region of interest" description="Disordered" evidence="4">
    <location>
        <begin position="521"/>
        <end position="547"/>
    </location>
</feature>
<feature type="compositionally biased region" description="Basic and acidic residues" evidence="4">
    <location>
        <begin position="1"/>
        <end position="19"/>
    </location>
</feature>
<feature type="compositionally biased region" description="Polar residues" evidence="4">
    <location>
        <begin position="33"/>
        <end position="52"/>
    </location>
</feature>
<feature type="compositionally biased region" description="Low complexity" evidence="4">
    <location>
        <begin position="72"/>
        <end position="87"/>
    </location>
</feature>
<feature type="compositionally biased region" description="Polar residues" evidence="4">
    <location>
        <begin position="88"/>
        <end position="128"/>
    </location>
</feature>
<feature type="compositionally biased region" description="Basic and acidic residues" evidence="4">
    <location>
        <begin position="132"/>
        <end position="142"/>
    </location>
</feature>
<feature type="compositionally biased region" description="Polar residues" evidence="4">
    <location>
        <begin position="147"/>
        <end position="156"/>
    </location>
</feature>
<feature type="compositionally biased region" description="Basic and acidic residues" evidence="4">
    <location>
        <begin position="256"/>
        <end position="272"/>
    </location>
</feature>
<feature type="compositionally biased region" description="Basic and acidic residues" evidence="4">
    <location>
        <begin position="521"/>
        <end position="535"/>
    </location>
</feature>
<feature type="compositionally biased region" description="Acidic residues" evidence="4">
    <location>
        <begin position="536"/>
        <end position="547"/>
    </location>
</feature>
<feature type="binding site" evidence="3">
    <location>
        <begin position="318"/>
        <end position="319"/>
    </location>
    <ligand>
        <name>mRNA</name>
        <dbReference type="ChEBI" id="CHEBI:33699"/>
    </ligand>
    <ligandPart>
        <name>mRNA cap</name>
    </ligandPart>
</feature>
<feature type="binding site" evidence="3">
    <location>
        <position position="322"/>
    </location>
    <ligand>
        <name>S-adenosyl-L-methionine</name>
        <dbReference type="ChEBI" id="CHEBI:59789"/>
    </ligand>
</feature>
<feature type="binding site" evidence="3">
    <location>
        <position position="365"/>
    </location>
    <ligand>
        <name>S-adenosyl-L-methionine</name>
        <dbReference type="ChEBI" id="CHEBI:59789"/>
    </ligand>
</feature>
<feature type="binding site" evidence="3">
    <location>
        <position position="389"/>
    </location>
    <ligand>
        <name>S-adenosyl-L-methionine</name>
        <dbReference type="ChEBI" id="CHEBI:59789"/>
    </ligand>
</feature>
<feature type="binding site" evidence="2">
    <location>
        <position position="427"/>
    </location>
    <ligand>
        <name>S-adenosyl-L-methionine</name>
        <dbReference type="ChEBI" id="CHEBI:59789"/>
    </ligand>
</feature>
<feature type="binding site" evidence="3">
    <location>
        <begin position="470"/>
        <end position="472"/>
    </location>
    <ligand>
        <name>S-adenosyl-L-methionine</name>
        <dbReference type="ChEBI" id="CHEBI:59789"/>
    </ligand>
</feature>
<feature type="binding site" evidence="2">
    <location>
        <position position="475"/>
    </location>
    <ligand>
        <name>S-adenosyl-L-methionine</name>
        <dbReference type="ChEBI" id="CHEBI:59789"/>
    </ligand>
</feature>
<feature type="site" description="mRNA cap binding" evidence="3">
    <location>
        <position position="368"/>
    </location>
</feature>
<feature type="site" description="mRNA cap binding" evidence="3">
    <location>
        <position position="374"/>
    </location>
</feature>
<feature type="site" description="mRNA cap binding" evidence="3">
    <location>
        <position position="401"/>
    </location>
</feature>
<feature type="site" description="mRNA cap binding" evidence="3">
    <location>
        <position position="474"/>
    </location>
</feature>
<feature type="site" description="mRNA cap binding" evidence="3">
    <location>
        <position position="591"/>
    </location>
</feature>
<feature type="site" description="mRNA cap binding" evidence="3">
    <location>
        <position position="659"/>
    </location>
</feature>
<sequence>MYDPARDSWEERDGDEARSLRGRLASDQPHAGFSSSEQIYGASGENNNTTDLQHPGPDPKTTASAKVLYAESPPAQSTTQTPPSISTHVQSPVNPAAQEASNTQSLTSAAQNQSNKSTTTMDNTSGSATPKPRADPSDKSNRPDQVASPTDQNGSQGDKKRKVPAEENASEKSQPTPDRPVSKRKRMEERHQKLRKRGRTPPSAYSRRDADETASAADRNGPTYRSTSPLPPPRSPTPEDQPRQRKRPGGGARMGLVDRETLRRRQEERERAQVEEAMRASQGRGLADVVRQHYNAVPQRGREWRKTESKIKGLRSFNNWIKSTLIQKFSPDEEFLARFNGTKDWAEDGGVPPVEEKRLLVIDLGCGKGGDLLKWQLAPQPVDLYVGLDPAEVSIVQARERYNGMKSGRGNRGRRNPIFHAEFQPKDCFGEWLGDVDIVQQVGIDPNVGPGGSVMSSRWGGGGFDVVASMFTIHYAFESEEKARQMLRNVAGCLKKGGRFLGVCPNSDVISARVSEINAKKKERQSQAKKEKTDEAPEDGEVEEDDGKVEWGNQIYRVRFPVTTPEDGIFRPPFGWKYSYFMEEAVEEVPEYVVPWEAFRALTEDYNLELQYRKPFLDIWRDEKDDPELGPLSERMGVRDRATGELLMTEEEKEAASFYHAFCFYKV</sequence>
<gene>
    <name type="primary">abd1</name>
    <name type="ORF">NFIA_053360</name>
</gene>
<accession>A1DMG9</accession>
<proteinExistence type="inferred from homology"/>
<protein>
    <recommendedName>
        <fullName>mRNA cap guanine-N(7) methyltransferase</fullName>
        <ecNumber evidence="2">2.1.1.56</ecNumber>
    </recommendedName>
    <alternativeName>
        <fullName>mRNA (guanine-N(7))-methyltransferase</fullName>
    </alternativeName>
    <alternativeName>
        <fullName>mRNA cap methyltransferase</fullName>
    </alternativeName>
</protein>